<keyword id="KW-0378">Hydrolase</keyword>
<keyword id="KW-0460">Magnesium</keyword>
<keyword id="KW-0464">Manganese</keyword>
<keyword id="KW-0479">Metal-binding</keyword>
<reference key="1">
    <citation type="journal article" date="2008" name="J. Bacteriol.">
        <title>Insights into the environmental resistance gene pool from the genome sequence of the multidrug-resistant environmental isolate Escherichia coli SMS-3-5.</title>
        <authorList>
            <person name="Fricke W.F."/>
            <person name="Wright M.S."/>
            <person name="Lindell A.H."/>
            <person name="Harkins D.M."/>
            <person name="Baker-Austin C."/>
            <person name="Ravel J."/>
            <person name="Stepanauskas R."/>
        </authorList>
    </citation>
    <scope>NUCLEOTIDE SEQUENCE [LARGE SCALE GENOMIC DNA]</scope>
    <source>
        <strain>SMS-3-5 / SECEC</strain>
    </source>
</reference>
<evidence type="ECO:0000255" key="1">
    <source>
        <dbReference type="HAMAP-Rule" id="MF_01592"/>
    </source>
</evidence>
<gene>
    <name evidence="1" type="primary">nudL</name>
    <name type="ordered locus">EcSMS35_1375</name>
</gene>
<organism>
    <name type="scientific">Escherichia coli (strain SMS-3-5 / SECEC)</name>
    <dbReference type="NCBI Taxonomy" id="439855"/>
    <lineage>
        <taxon>Bacteria</taxon>
        <taxon>Pseudomonadati</taxon>
        <taxon>Pseudomonadota</taxon>
        <taxon>Gammaproteobacteria</taxon>
        <taxon>Enterobacterales</taxon>
        <taxon>Enterobacteriaceae</taxon>
        <taxon>Escherichia</taxon>
    </lineage>
</organism>
<accession>B1LD60</accession>
<name>NUDL_ECOSM</name>
<protein>
    <recommendedName>
        <fullName evidence="1">Uncharacterized Nudix hydrolase NudL</fullName>
        <ecNumber evidence="1">3.6.1.-</ecNumber>
    </recommendedName>
</protein>
<comment type="function">
    <text evidence="1">Probably mediates the hydrolysis of some nucleoside diphosphate derivatives.</text>
</comment>
<comment type="cofactor">
    <cofactor evidence="1">
        <name>Mn(2+)</name>
        <dbReference type="ChEBI" id="CHEBI:29035"/>
    </cofactor>
    <cofactor evidence="1">
        <name>Mg(2+)</name>
        <dbReference type="ChEBI" id="CHEBI:18420"/>
    </cofactor>
</comment>
<comment type="similarity">
    <text evidence="1">Belongs to the Nudix hydrolase family. PCD1 subfamily.</text>
</comment>
<sequence length="192" mass="21494">MEYRSLTLDDFLSRFQLLRPQINRETLNHRQAAVLIPIVRRPQPGLLLTQRSIHLRKHAGQVAFPGGAVDDTDASVIAAALREAEEEVAIPPSTVEVIGVLPPVDSVTGYQVTPVVGIIPPDLPYRASEDEVSAVFEMPLAQALHLGRYHPLDIYRRGDSHRVWLSWYEQYFVWGMTAGIIRELALQIGVKP</sequence>
<proteinExistence type="inferred from homology"/>
<feature type="chain" id="PRO_1000147819" description="Uncharacterized Nudix hydrolase NudL">
    <location>
        <begin position="1"/>
        <end position="192"/>
    </location>
</feature>
<feature type="domain" description="Nudix hydrolase" evidence="1">
    <location>
        <begin position="29"/>
        <end position="160"/>
    </location>
</feature>
<feature type="short sequence motif" description="Nudix box">
    <location>
        <begin position="67"/>
        <end position="89"/>
    </location>
</feature>
<feature type="binding site" evidence="1">
    <location>
        <position position="83"/>
    </location>
    <ligand>
        <name>Mg(2+)</name>
        <dbReference type="ChEBI" id="CHEBI:18420"/>
    </ligand>
</feature>
<feature type="binding site" evidence="1">
    <location>
        <position position="87"/>
    </location>
    <ligand>
        <name>Mg(2+)</name>
        <dbReference type="ChEBI" id="CHEBI:18420"/>
    </ligand>
</feature>
<dbReference type="EC" id="3.6.1.-" evidence="1"/>
<dbReference type="EMBL" id="CP000970">
    <property type="protein sequence ID" value="ACB16216.1"/>
    <property type="molecule type" value="Genomic_DNA"/>
</dbReference>
<dbReference type="RefSeq" id="WP_000456731.1">
    <property type="nucleotide sequence ID" value="NC_010498.1"/>
</dbReference>
<dbReference type="SMR" id="B1LD60"/>
<dbReference type="KEGG" id="ecm:EcSMS35_1375"/>
<dbReference type="HOGENOM" id="CLU_040940_5_2_6"/>
<dbReference type="Proteomes" id="UP000007011">
    <property type="component" value="Chromosome"/>
</dbReference>
<dbReference type="GO" id="GO:0010945">
    <property type="term" value="F:coenzyme A diphosphatase activity"/>
    <property type="evidence" value="ECO:0007669"/>
    <property type="project" value="InterPro"/>
</dbReference>
<dbReference type="GO" id="GO:0000287">
    <property type="term" value="F:magnesium ion binding"/>
    <property type="evidence" value="ECO:0007669"/>
    <property type="project" value="UniProtKB-UniRule"/>
</dbReference>
<dbReference type="GO" id="GO:0030145">
    <property type="term" value="F:manganese ion binding"/>
    <property type="evidence" value="ECO:0007669"/>
    <property type="project" value="UniProtKB-UniRule"/>
</dbReference>
<dbReference type="GO" id="GO:0009132">
    <property type="term" value="P:nucleoside diphosphate metabolic process"/>
    <property type="evidence" value="ECO:0007669"/>
    <property type="project" value="InterPro"/>
</dbReference>
<dbReference type="CDD" id="cd03426">
    <property type="entry name" value="NUDIX_CoAse_Nudt7"/>
    <property type="match status" value="1"/>
</dbReference>
<dbReference type="FunFam" id="3.90.79.10:FF:000013">
    <property type="entry name" value="Uncharacterized Nudix hydrolase NudL"/>
    <property type="match status" value="1"/>
</dbReference>
<dbReference type="Gene3D" id="3.90.79.10">
    <property type="entry name" value="Nucleoside Triphosphate Pyrophosphohydrolase"/>
    <property type="match status" value="1"/>
</dbReference>
<dbReference type="HAMAP" id="MF_01592">
    <property type="entry name" value="Nudix_NudL"/>
    <property type="match status" value="1"/>
</dbReference>
<dbReference type="InterPro" id="IPR045121">
    <property type="entry name" value="CoAse"/>
</dbReference>
<dbReference type="InterPro" id="IPR015797">
    <property type="entry name" value="NUDIX_hydrolase-like_dom_sf"/>
</dbReference>
<dbReference type="InterPro" id="IPR000086">
    <property type="entry name" value="NUDIX_hydrolase_dom"/>
</dbReference>
<dbReference type="InterPro" id="IPR000059">
    <property type="entry name" value="NUDIX_hydrolase_NudL_CS"/>
</dbReference>
<dbReference type="InterPro" id="IPR023735">
    <property type="entry name" value="Nudix_NudL"/>
</dbReference>
<dbReference type="NCBIfam" id="NF007980">
    <property type="entry name" value="PRK10707.1"/>
    <property type="match status" value="1"/>
</dbReference>
<dbReference type="PANTHER" id="PTHR12992:SF11">
    <property type="entry name" value="MITOCHONDRIAL COENZYME A DIPHOSPHATASE NUDT8"/>
    <property type="match status" value="1"/>
</dbReference>
<dbReference type="PANTHER" id="PTHR12992">
    <property type="entry name" value="NUDIX HYDROLASE"/>
    <property type="match status" value="1"/>
</dbReference>
<dbReference type="Pfam" id="PF00293">
    <property type="entry name" value="NUDIX"/>
    <property type="match status" value="1"/>
</dbReference>
<dbReference type="SUPFAM" id="SSF55811">
    <property type="entry name" value="Nudix"/>
    <property type="match status" value="1"/>
</dbReference>
<dbReference type="PROSITE" id="PS51462">
    <property type="entry name" value="NUDIX"/>
    <property type="match status" value="1"/>
</dbReference>
<dbReference type="PROSITE" id="PS01293">
    <property type="entry name" value="NUDIX_COA"/>
    <property type="match status" value="1"/>
</dbReference>